<gene>
    <name evidence="1" type="primary">purU</name>
    <name type="ordered locus">SF1232</name>
    <name type="ordered locus">S1318</name>
</gene>
<protein>
    <recommendedName>
        <fullName evidence="1">Formyltetrahydrofolate deformylase</fullName>
        <ecNumber evidence="1">3.5.1.10</ecNumber>
    </recommendedName>
    <alternativeName>
        <fullName evidence="1">Formyl-FH(4) hydrolase</fullName>
    </alternativeName>
</protein>
<keyword id="KW-0378">Hydrolase</keyword>
<keyword id="KW-0554">One-carbon metabolism</keyword>
<keyword id="KW-0658">Purine biosynthesis</keyword>
<keyword id="KW-1185">Reference proteome</keyword>
<evidence type="ECO:0000255" key="1">
    <source>
        <dbReference type="HAMAP-Rule" id="MF_01927"/>
    </source>
</evidence>
<evidence type="ECO:0000305" key="2"/>
<proteinExistence type="inferred from homology"/>
<feature type="chain" id="PRO_0000074966" description="Formyltetrahydrofolate deformylase">
    <location>
        <begin position="1"/>
        <end position="280"/>
    </location>
</feature>
<feature type="domain" description="ACT" evidence="1">
    <location>
        <begin position="8"/>
        <end position="86"/>
    </location>
</feature>
<feature type="active site" evidence="1">
    <location>
        <position position="225"/>
    </location>
</feature>
<feature type="sequence conflict" description="In Ref. 1." evidence="2" ref="1">
    <original>R</original>
    <variation>L</variation>
    <location>
        <position position="44"/>
    </location>
</feature>
<organism>
    <name type="scientific">Shigella flexneri</name>
    <dbReference type="NCBI Taxonomy" id="623"/>
    <lineage>
        <taxon>Bacteria</taxon>
        <taxon>Pseudomonadati</taxon>
        <taxon>Pseudomonadota</taxon>
        <taxon>Gammaproteobacteria</taxon>
        <taxon>Enterobacterales</taxon>
        <taxon>Enterobacteriaceae</taxon>
        <taxon>Shigella</taxon>
    </lineage>
</organism>
<comment type="function">
    <text evidence="1">Catalyzes the hydrolysis of 10-formyltetrahydrofolate (formyl-FH4) to formate and tetrahydrofolate (FH4).</text>
</comment>
<comment type="catalytic activity">
    <reaction evidence="1">
        <text>(6R)-10-formyltetrahydrofolate + H2O = (6S)-5,6,7,8-tetrahydrofolate + formate + H(+)</text>
        <dbReference type="Rhea" id="RHEA:19833"/>
        <dbReference type="ChEBI" id="CHEBI:15377"/>
        <dbReference type="ChEBI" id="CHEBI:15378"/>
        <dbReference type="ChEBI" id="CHEBI:15740"/>
        <dbReference type="ChEBI" id="CHEBI:57453"/>
        <dbReference type="ChEBI" id="CHEBI:195366"/>
        <dbReference type="EC" id="3.5.1.10"/>
    </reaction>
</comment>
<comment type="pathway">
    <text evidence="1">Purine metabolism; IMP biosynthesis via de novo pathway; formate from 10-formyl-5,6,7,8-tetrahydrofolate: step 1/1.</text>
</comment>
<comment type="similarity">
    <text evidence="1">Belongs to the PurU family.</text>
</comment>
<sequence>MHSLQRKVLRTICPDQKGLIARITNICYKHELNIVQNNEFVDHRTGRFFMRTELEGIFNDSTLLADLDSALPEGSVRELNPAGRRRIVILVTKEAHCLGDLLMKANYGGLDVEIAAVIGNHDTLRSLVERFDIPFELVSHEGLSRNEHDQKMADAIDAYQPDYVVLAKYMRVLTPEFVARFPNKIINIHHSFLPAFIGARPYHQAYERGVKIIGATAHYVNDNLDEGPIIMQDVIHVDHTYTAEDMMRAGRDVEKNVLSRALYKVLAQRVFVYGNRTIIL</sequence>
<accession>P0A441</accession>
<accession>P38480</accession>
<reference key="1">
    <citation type="journal article" date="1992" name="Mol. Microbiol.">
        <title>Temperature regulation of Shigella virulence: identification of the repressor gene virR, an analogue of hns, and partial complementation by tyrosyl transfer RNA (tRNA1(Tyr)).</title>
        <authorList>
            <person name="Hromockyj A.E."/>
            <person name="Tucker S.C."/>
            <person name="Maurelli A.T."/>
        </authorList>
    </citation>
    <scope>NUCLEOTIDE SEQUENCE [GENOMIC DNA]</scope>
    <source>
        <strain>ATCC 700930 / 2457T / Serotype 2a</strain>
    </source>
</reference>
<reference key="2">
    <citation type="journal article" date="2002" name="Nucleic Acids Res.">
        <title>Genome sequence of Shigella flexneri 2a: insights into pathogenicity through comparison with genomes of Escherichia coli K12 and O157.</title>
        <authorList>
            <person name="Jin Q."/>
            <person name="Yuan Z."/>
            <person name="Xu J."/>
            <person name="Wang Y."/>
            <person name="Shen Y."/>
            <person name="Lu W."/>
            <person name="Wang J."/>
            <person name="Liu H."/>
            <person name="Yang J."/>
            <person name="Yang F."/>
            <person name="Zhang X."/>
            <person name="Zhang J."/>
            <person name="Yang G."/>
            <person name="Wu H."/>
            <person name="Qu D."/>
            <person name="Dong J."/>
            <person name="Sun L."/>
            <person name="Xue Y."/>
            <person name="Zhao A."/>
            <person name="Gao Y."/>
            <person name="Zhu J."/>
            <person name="Kan B."/>
            <person name="Ding K."/>
            <person name="Chen S."/>
            <person name="Cheng H."/>
            <person name="Yao Z."/>
            <person name="He B."/>
            <person name="Chen R."/>
            <person name="Ma D."/>
            <person name="Qiang B."/>
            <person name="Wen Y."/>
            <person name="Hou Y."/>
            <person name="Yu J."/>
        </authorList>
    </citation>
    <scope>NUCLEOTIDE SEQUENCE [LARGE SCALE GENOMIC DNA]</scope>
    <source>
        <strain>301 / Serotype 2a</strain>
    </source>
</reference>
<reference key="3">
    <citation type="journal article" date="2003" name="Infect. Immun.">
        <title>Complete genome sequence and comparative genomics of Shigella flexneri serotype 2a strain 2457T.</title>
        <authorList>
            <person name="Wei J."/>
            <person name="Goldberg M.B."/>
            <person name="Burland V."/>
            <person name="Venkatesan M.M."/>
            <person name="Deng W."/>
            <person name="Fournier G."/>
            <person name="Mayhew G.F."/>
            <person name="Plunkett G. III"/>
            <person name="Rose D.J."/>
            <person name="Darling A."/>
            <person name="Mau B."/>
            <person name="Perna N.T."/>
            <person name="Payne S.M."/>
            <person name="Runyen-Janecky L.J."/>
            <person name="Zhou S."/>
            <person name="Schwartz D.C."/>
            <person name="Blattner F.R."/>
        </authorList>
    </citation>
    <scope>NUCLEOTIDE SEQUENCE [LARGE SCALE GENOMIC DNA]</scope>
    <source>
        <strain>ATCC 700930 / 2457T / Serotype 2a</strain>
    </source>
</reference>
<reference key="4">
    <citation type="journal article" date="1993" name="J. Bacteriol.">
        <title>purU, a source of formate for purT-dependent phosphoribosyl-N-formylglycinamide synthesis.</title>
        <authorList>
            <person name="Nagy P.L."/>
            <person name="McCorkle G."/>
            <person name="Zalkin H."/>
        </authorList>
    </citation>
    <scope>IDENTIFICATION</scope>
</reference>
<name>PURU_SHIFL</name>
<dbReference type="EC" id="3.5.1.10" evidence="1"/>
<dbReference type="EMBL" id="X66849">
    <property type="status" value="NOT_ANNOTATED_CDS"/>
    <property type="molecule type" value="Genomic_DNA"/>
</dbReference>
<dbReference type="EMBL" id="AE005674">
    <property type="protein sequence ID" value="AAN42845.1"/>
    <property type="molecule type" value="Genomic_DNA"/>
</dbReference>
<dbReference type="EMBL" id="AE014073">
    <property type="protein sequence ID" value="AAP16730.1"/>
    <property type="molecule type" value="Genomic_DNA"/>
</dbReference>
<dbReference type="RefSeq" id="NP_707138.1">
    <property type="nucleotide sequence ID" value="NC_004337.2"/>
</dbReference>
<dbReference type="RefSeq" id="WP_000555849.1">
    <property type="nucleotide sequence ID" value="NZ_WPGW01000029.1"/>
</dbReference>
<dbReference type="SMR" id="P0A441"/>
<dbReference type="STRING" id="198214.SF1232"/>
<dbReference type="PaxDb" id="198214-SF1232"/>
<dbReference type="DNASU" id="1079475"/>
<dbReference type="GeneID" id="1024168"/>
<dbReference type="GeneID" id="75203345"/>
<dbReference type="KEGG" id="sfl:SF1232"/>
<dbReference type="KEGG" id="sfx:S1318"/>
<dbReference type="PATRIC" id="fig|198214.7.peg.1450"/>
<dbReference type="HOGENOM" id="CLU_038395_3_2_6"/>
<dbReference type="UniPathway" id="UPA00074">
    <property type="reaction ID" value="UER00170"/>
</dbReference>
<dbReference type="Proteomes" id="UP000001006">
    <property type="component" value="Chromosome"/>
</dbReference>
<dbReference type="Proteomes" id="UP000002673">
    <property type="component" value="Chromosome"/>
</dbReference>
<dbReference type="GO" id="GO:0008864">
    <property type="term" value="F:formyltetrahydrofolate deformylase activity"/>
    <property type="evidence" value="ECO:0007669"/>
    <property type="project" value="UniProtKB-UniRule"/>
</dbReference>
<dbReference type="GO" id="GO:0006189">
    <property type="term" value="P:'de novo' IMP biosynthetic process"/>
    <property type="evidence" value="ECO:0007669"/>
    <property type="project" value="UniProtKB-UniRule"/>
</dbReference>
<dbReference type="GO" id="GO:0006730">
    <property type="term" value="P:one-carbon metabolic process"/>
    <property type="evidence" value="ECO:0007669"/>
    <property type="project" value="UniProtKB-KW"/>
</dbReference>
<dbReference type="CDD" id="cd04875">
    <property type="entry name" value="ACT_F4HF-DF"/>
    <property type="match status" value="1"/>
</dbReference>
<dbReference type="CDD" id="cd08648">
    <property type="entry name" value="FMT_core_Formyl-FH4-Hydrolase_C"/>
    <property type="match status" value="1"/>
</dbReference>
<dbReference type="FunFam" id="3.30.70.260:FF:000021">
    <property type="entry name" value="Formyltetrahydrofolate deformylase"/>
    <property type="match status" value="1"/>
</dbReference>
<dbReference type="FunFam" id="3.40.50.170:FF:000001">
    <property type="entry name" value="Formyltetrahydrofolate deformylase"/>
    <property type="match status" value="1"/>
</dbReference>
<dbReference type="Gene3D" id="3.30.70.260">
    <property type="match status" value="1"/>
</dbReference>
<dbReference type="Gene3D" id="3.40.50.170">
    <property type="entry name" value="Formyl transferase, N-terminal domain"/>
    <property type="match status" value="1"/>
</dbReference>
<dbReference type="HAMAP" id="MF_01927">
    <property type="entry name" value="PurU"/>
    <property type="match status" value="1"/>
</dbReference>
<dbReference type="InterPro" id="IPR045865">
    <property type="entry name" value="ACT-like_dom_sf"/>
</dbReference>
<dbReference type="InterPro" id="IPR002912">
    <property type="entry name" value="ACT_dom"/>
</dbReference>
<dbReference type="InterPro" id="IPR041729">
    <property type="entry name" value="Formyl-FH4-Hydrolase_C"/>
</dbReference>
<dbReference type="InterPro" id="IPR002376">
    <property type="entry name" value="Formyl_transf_N"/>
</dbReference>
<dbReference type="InterPro" id="IPR036477">
    <property type="entry name" value="Formyl_transf_N_sf"/>
</dbReference>
<dbReference type="InterPro" id="IPR004810">
    <property type="entry name" value="PurU"/>
</dbReference>
<dbReference type="InterPro" id="IPR044074">
    <property type="entry name" value="PurU_ACT"/>
</dbReference>
<dbReference type="NCBIfam" id="NF004684">
    <property type="entry name" value="PRK06027.1"/>
    <property type="match status" value="1"/>
</dbReference>
<dbReference type="NCBIfam" id="TIGR00655">
    <property type="entry name" value="PurU"/>
    <property type="match status" value="1"/>
</dbReference>
<dbReference type="PANTHER" id="PTHR42706">
    <property type="entry name" value="FORMYLTETRAHYDROFOLATE DEFORMYLASE"/>
    <property type="match status" value="1"/>
</dbReference>
<dbReference type="PANTHER" id="PTHR42706:SF1">
    <property type="entry name" value="FORMYLTETRAHYDROFOLATE DEFORMYLASE 2, MITOCHONDRIAL"/>
    <property type="match status" value="1"/>
</dbReference>
<dbReference type="Pfam" id="PF01842">
    <property type="entry name" value="ACT"/>
    <property type="match status" value="1"/>
</dbReference>
<dbReference type="Pfam" id="PF00551">
    <property type="entry name" value="Formyl_trans_N"/>
    <property type="match status" value="1"/>
</dbReference>
<dbReference type="PIRSF" id="PIRSF036480">
    <property type="entry name" value="FormyFH4_hydr"/>
    <property type="match status" value="1"/>
</dbReference>
<dbReference type="PRINTS" id="PR01575">
    <property type="entry name" value="FFH4HYDRLASE"/>
</dbReference>
<dbReference type="SUPFAM" id="SSF55021">
    <property type="entry name" value="ACT-like"/>
    <property type="match status" value="1"/>
</dbReference>
<dbReference type="SUPFAM" id="SSF53328">
    <property type="entry name" value="Formyltransferase"/>
    <property type="match status" value="1"/>
</dbReference>
<dbReference type="PROSITE" id="PS51671">
    <property type="entry name" value="ACT"/>
    <property type="match status" value="1"/>
</dbReference>